<protein>
    <recommendedName>
        <fullName evidence="1">Pescadillo homolog</fullName>
    </recommendedName>
    <alternativeName>
        <fullName evidence="1">Nucleolar protein 7 homolog</fullName>
    </alternativeName>
</protein>
<proteinExistence type="evidence at protein level"/>
<feature type="chain" id="PRO_0000186191" description="Pescadillo homolog">
    <location>
        <begin position="1"/>
        <end position="607"/>
    </location>
</feature>
<feature type="domain" description="BRCT" evidence="1">
    <location>
        <begin position="348"/>
        <end position="441"/>
    </location>
</feature>
<feature type="region of interest" description="Disordered" evidence="2">
    <location>
        <begin position="301"/>
        <end position="341"/>
    </location>
</feature>
<feature type="region of interest" description="Disordered" evidence="2">
    <location>
        <begin position="531"/>
        <end position="607"/>
    </location>
</feature>
<feature type="coiled-coil region" evidence="1">
    <location>
        <begin position="497"/>
        <end position="604"/>
    </location>
</feature>
<feature type="compositionally biased region" description="Acidic residues" evidence="2">
    <location>
        <begin position="313"/>
        <end position="324"/>
    </location>
</feature>
<feature type="compositionally biased region" description="Basic and acidic residues" evidence="2">
    <location>
        <begin position="325"/>
        <end position="339"/>
    </location>
</feature>
<feature type="compositionally biased region" description="Basic and acidic residues" evidence="2">
    <location>
        <begin position="544"/>
        <end position="561"/>
    </location>
</feature>
<feature type="compositionally biased region" description="Basic and acidic residues" evidence="2">
    <location>
        <begin position="595"/>
        <end position="607"/>
    </location>
</feature>
<feature type="helix" evidence="5">
    <location>
        <begin position="12"/>
        <end position="15"/>
    </location>
</feature>
<feature type="strand" evidence="5">
    <location>
        <begin position="16"/>
        <end position="18"/>
    </location>
</feature>
<feature type="helix" evidence="5">
    <location>
        <begin position="19"/>
        <end position="26"/>
    </location>
</feature>
<feature type="helix" evidence="5">
    <location>
        <begin position="30"/>
        <end position="39"/>
    </location>
</feature>
<feature type="helix" evidence="5">
    <location>
        <begin position="50"/>
        <end position="53"/>
    </location>
</feature>
<feature type="turn" evidence="4">
    <location>
        <begin position="54"/>
        <end position="56"/>
    </location>
</feature>
<feature type="strand" evidence="5">
    <location>
        <begin position="63"/>
        <end position="65"/>
    </location>
</feature>
<feature type="helix" evidence="5">
    <location>
        <begin position="66"/>
        <end position="73"/>
    </location>
</feature>
<feature type="helix" evidence="5">
    <location>
        <begin position="76"/>
        <end position="97"/>
    </location>
</feature>
<feature type="helix" evidence="5">
    <location>
        <begin position="100"/>
        <end position="108"/>
    </location>
</feature>
<feature type="helix" evidence="5">
    <location>
        <begin position="116"/>
        <end position="122"/>
    </location>
</feature>
<feature type="helix" evidence="5">
    <location>
        <begin position="126"/>
        <end position="131"/>
    </location>
</feature>
<feature type="helix" evidence="5">
    <location>
        <begin position="133"/>
        <end position="145"/>
    </location>
</feature>
<feature type="strand" evidence="5">
    <location>
        <begin position="150"/>
        <end position="152"/>
    </location>
</feature>
<feature type="helix" evidence="5">
    <location>
        <begin position="154"/>
        <end position="174"/>
    </location>
</feature>
<feature type="strand" evidence="5">
    <location>
        <begin position="177"/>
        <end position="182"/>
    </location>
</feature>
<feature type="strand" evidence="5">
    <location>
        <begin position="184"/>
        <end position="193"/>
    </location>
</feature>
<feature type="strand" evidence="5">
    <location>
        <begin position="196"/>
        <end position="203"/>
    </location>
</feature>
<feature type="helix" evidence="5">
    <location>
        <begin position="216"/>
        <end position="241"/>
    </location>
</feature>
<feature type="helix" evidence="5">
    <location>
        <begin position="251"/>
        <end position="255"/>
    </location>
</feature>
<feature type="helix" evidence="5">
    <location>
        <begin position="259"/>
        <end position="261"/>
    </location>
</feature>
<feature type="turn" evidence="5">
    <location>
        <begin position="350"/>
        <end position="355"/>
    </location>
</feature>
<feature type="strand" evidence="5">
    <location>
        <begin position="357"/>
        <end position="360"/>
    </location>
</feature>
<feature type="helix" evidence="5">
    <location>
        <begin position="366"/>
        <end position="375"/>
    </location>
</feature>
<feature type="strand" evidence="5">
    <location>
        <begin position="379"/>
        <end position="382"/>
    </location>
</feature>
<feature type="turn" evidence="5">
    <location>
        <begin position="384"/>
        <end position="386"/>
    </location>
</feature>
<feature type="strand" evidence="5">
    <location>
        <begin position="400"/>
        <end position="403"/>
    </location>
</feature>
<feature type="strand" evidence="4">
    <location>
        <begin position="414"/>
        <end position="416"/>
    </location>
</feature>
<feature type="helix" evidence="5">
    <location>
        <begin position="421"/>
        <end position="430"/>
    </location>
</feature>
<feature type="turn" evidence="5">
    <location>
        <begin position="436"/>
        <end position="439"/>
    </location>
</feature>
<feature type="helix" evidence="4">
    <location>
        <begin position="554"/>
        <end position="557"/>
    </location>
</feature>
<feature type="turn" evidence="4">
    <location>
        <begin position="561"/>
        <end position="563"/>
    </location>
</feature>
<feature type="helix" evidence="4">
    <location>
        <begin position="571"/>
        <end position="597"/>
    </location>
</feature>
<reference key="1">
    <citation type="journal article" date="2002" name="Nature">
        <title>The genome sequence of Schizosaccharomyces pombe.</title>
        <authorList>
            <person name="Wood V."/>
            <person name="Gwilliam R."/>
            <person name="Rajandream M.A."/>
            <person name="Lyne M.H."/>
            <person name="Lyne R."/>
            <person name="Stewart A."/>
            <person name="Sgouros J.G."/>
            <person name="Peat N."/>
            <person name="Hayles J."/>
            <person name="Baker S.G."/>
            <person name="Basham D."/>
            <person name="Bowman S."/>
            <person name="Brooks K."/>
            <person name="Brown D."/>
            <person name="Brown S."/>
            <person name="Chillingworth T."/>
            <person name="Churcher C.M."/>
            <person name="Collins M."/>
            <person name="Connor R."/>
            <person name="Cronin A."/>
            <person name="Davis P."/>
            <person name="Feltwell T."/>
            <person name="Fraser A."/>
            <person name="Gentles S."/>
            <person name="Goble A."/>
            <person name="Hamlin N."/>
            <person name="Harris D.E."/>
            <person name="Hidalgo J."/>
            <person name="Hodgson G."/>
            <person name="Holroyd S."/>
            <person name="Hornsby T."/>
            <person name="Howarth S."/>
            <person name="Huckle E.J."/>
            <person name="Hunt S."/>
            <person name="Jagels K."/>
            <person name="James K.D."/>
            <person name="Jones L."/>
            <person name="Jones M."/>
            <person name="Leather S."/>
            <person name="McDonald S."/>
            <person name="McLean J."/>
            <person name="Mooney P."/>
            <person name="Moule S."/>
            <person name="Mungall K.L."/>
            <person name="Murphy L.D."/>
            <person name="Niblett D."/>
            <person name="Odell C."/>
            <person name="Oliver K."/>
            <person name="O'Neil S."/>
            <person name="Pearson D."/>
            <person name="Quail M.A."/>
            <person name="Rabbinowitsch E."/>
            <person name="Rutherford K.M."/>
            <person name="Rutter S."/>
            <person name="Saunders D."/>
            <person name="Seeger K."/>
            <person name="Sharp S."/>
            <person name="Skelton J."/>
            <person name="Simmonds M.N."/>
            <person name="Squares R."/>
            <person name="Squares S."/>
            <person name="Stevens K."/>
            <person name="Taylor K."/>
            <person name="Taylor R.G."/>
            <person name="Tivey A."/>
            <person name="Walsh S.V."/>
            <person name="Warren T."/>
            <person name="Whitehead S."/>
            <person name="Woodward J.R."/>
            <person name="Volckaert G."/>
            <person name="Aert R."/>
            <person name="Robben J."/>
            <person name="Grymonprez B."/>
            <person name="Weltjens I."/>
            <person name="Vanstreels E."/>
            <person name="Rieger M."/>
            <person name="Schaefer M."/>
            <person name="Mueller-Auer S."/>
            <person name="Gabel C."/>
            <person name="Fuchs M."/>
            <person name="Duesterhoeft A."/>
            <person name="Fritzc C."/>
            <person name="Holzer E."/>
            <person name="Moestl D."/>
            <person name="Hilbert H."/>
            <person name="Borzym K."/>
            <person name="Langer I."/>
            <person name="Beck A."/>
            <person name="Lehrach H."/>
            <person name="Reinhardt R."/>
            <person name="Pohl T.M."/>
            <person name="Eger P."/>
            <person name="Zimmermann W."/>
            <person name="Wedler H."/>
            <person name="Wambutt R."/>
            <person name="Purnelle B."/>
            <person name="Goffeau A."/>
            <person name="Cadieu E."/>
            <person name="Dreano S."/>
            <person name="Gloux S."/>
            <person name="Lelaure V."/>
            <person name="Mottier S."/>
            <person name="Galibert F."/>
            <person name="Aves S.J."/>
            <person name="Xiang Z."/>
            <person name="Hunt C."/>
            <person name="Moore K."/>
            <person name="Hurst S.M."/>
            <person name="Lucas M."/>
            <person name="Rochet M."/>
            <person name="Gaillardin C."/>
            <person name="Tallada V.A."/>
            <person name="Garzon A."/>
            <person name="Thode G."/>
            <person name="Daga R.R."/>
            <person name="Cruzado L."/>
            <person name="Jimenez J."/>
            <person name="Sanchez M."/>
            <person name="del Rey F."/>
            <person name="Benito J."/>
            <person name="Dominguez A."/>
            <person name="Revuelta J.L."/>
            <person name="Moreno S."/>
            <person name="Armstrong J."/>
            <person name="Forsburg S.L."/>
            <person name="Cerutti L."/>
            <person name="Lowe T."/>
            <person name="McCombie W.R."/>
            <person name="Paulsen I."/>
            <person name="Potashkin J."/>
            <person name="Shpakovski G.V."/>
            <person name="Ussery D."/>
            <person name="Barrell B.G."/>
            <person name="Nurse P."/>
        </authorList>
    </citation>
    <scope>NUCLEOTIDE SEQUENCE [LARGE SCALE GENOMIC DNA]</scope>
    <source>
        <strain>972 / ATCC 24843</strain>
    </source>
</reference>
<reference key="2">
    <citation type="journal article" date="2000" name="Genes Cells">
        <title>Large-scale screening of intracellular protein localization in living fission yeast cells by the use of a GFP-fusion genomic DNA library.</title>
        <authorList>
            <person name="Ding D.-Q."/>
            <person name="Tomita Y."/>
            <person name="Yamamoto A."/>
            <person name="Chikashige Y."/>
            <person name="Haraguchi T."/>
            <person name="Hiraoka Y."/>
        </authorList>
    </citation>
    <scope>NUCLEOTIDE SEQUENCE [LARGE SCALE GENOMIC DNA] OF 65-116</scope>
    <scope>SUBCELLULAR LOCATION</scope>
    <source>
        <strain>ATCC 38364 / 968</strain>
    </source>
</reference>
<evidence type="ECO:0000255" key="1">
    <source>
        <dbReference type="HAMAP-Rule" id="MF_03028"/>
    </source>
</evidence>
<evidence type="ECO:0000256" key="2">
    <source>
        <dbReference type="SAM" id="MobiDB-lite"/>
    </source>
</evidence>
<evidence type="ECO:0000269" key="3">
    <source>
    </source>
</evidence>
<evidence type="ECO:0007829" key="4">
    <source>
        <dbReference type="PDB" id="8ETG"/>
    </source>
</evidence>
<evidence type="ECO:0007829" key="5">
    <source>
        <dbReference type="PDB" id="8EV3"/>
    </source>
</evidence>
<comment type="function">
    <text evidence="1">Component of the NOP7 complex, which is required for maturation of the 25S and 5.8S ribosomal RNAs and formation of the 60S ribosome.</text>
</comment>
<comment type="subunit">
    <text evidence="1">Component of the NOP7 complex, composed of erb1/SPBC4F6.13c, ppp1/SPBC19F5.05c and ytm1/SPAC890.04c. Within the NOP7 complex erb1/SPBC4F6.13c appears to interact directly with ppp1/SPBC19F5.05c and ytm1/SPAC890.04c. The NOP7 complex also associates with the 66S pre-ribosome.</text>
</comment>
<comment type="subcellular location">
    <subcellularLocation>
        <location evidence="1">Nucleus</location>
        <location evidence="1">Nucleoplasm</location>
    </subcellularLocation>
    <subcellularLocation>
        <location evidence="1 3">Nucleus</location>
        <location evidence="1 3">Nucleolus</location>
    </subcellularLocation>
</comment>
<comment type="similarity">
    <text evidence="1">Belongs to the pescadillo family.</text>
</comment>
<keyword id="KW-0002">3D-structure</keyword>
<keyword id="KW-0175">Coiled coil</keyword>
<keyword id="KW-0539">Nucleus</keyword>
<keyword id="KW-1185">Reference proteome</keyword>
<keyword id="KW-0690">Ribosome biogenesis</keyword>
<keyword id="KW-0698">rRNA processing</keyword>
<dbReference type="EMBL" id="CU329671">
    <property type="protein sequence ID" value="CAA18653.1"/>
    <property type="molecule type" value="Genomic_DNA"/>
</dbReference>
<dbReference type="EMBL" id="AB027979">
    <property type="protein sequence ID" value="BAA87283.1"/>
    <property type="molecule type" value="Genomic_DNA"/>
</dbReference>
<dbReference type="PIR" id="T39823">
    <property type="entry name" value="T39823"/>
</dbReference>
<dbReference type="RefSeq" id="NP_596543.1">
    <property type="nucleotide sequence ID" value="NM_001022464.2"/>
</dbReference>
<dbReference type="PDB" id="8ESQ">
    <property type="method" value="EM"/>
    <property type="resolution" value="2.80 A"/>
    <property type="chains" value="n=1-607"/>
</dbReference>
<dbReference type="PDB" id="8ESR">
    <property type="method" value="EM"/>
    <property type="resolution" value="3.20 A"/>
    <property type="chains" value="n=1-607"/>
</dbReference>
<dbReference type="PDB" id="8ETG">
    <property type="method" value="EM"/>
    <property type="resolution" value="3.40 A"/>
    <property type="chains" value="n=1-607"/>
</dbReference>
<dbReference type="PDB" id="8ETH">
    <property type="method" value="EM"/>
    <property type="resolution" value="3.80 A"/>
    <property type="chains" value="n=1-607"/>
</dbReference>
<dbReference type="PDB" id="8ETI">
    <property type="method" value="EM"/>
    <property type="resolution" value="3.70 A"/>
    <property type="chains" value="n=1-607"/>
</dbReference>
<dbReference type="PDB" id="8EUG">
    <property type="method" value="EM"/>
    <property type="resolution" value="2.80 A"/>
    <property type="chains" value="n=1-607"/>
</dbReference>
<dbReference type="PDB" id="8EUI">
    <property type="method" value="EM"/>
    <property type="resolution" value="3.10 A"/>
    <property type="chains" value="n=1-607"/>
</dbReference>
<dbReference type="PDB" id="8EV3">
    <property type="method" value="EM"/>
    <property type="resolution" value="3.00 A"/>
    <property type="chains" value="n=1-607"/>
</dbReference>
<dbReference type="PDBsum" id="8ESQ"/>
<dbReference type="PDBsum" id="8ESR"/>
<dbReference type="PDBsum" id="8ETG"/>
<dbReference type="PDBsum" id="8ETH"/>
<dbReference type="PDBsum" id="8ETI"/>
<dbReference type="PDBsum" id="8EUG"/>
<dbReference type="PDBsum" id="8EUI"/>
<dbReference type="PDBsum" id="8EV3"/>
<dbReference type="SMR" id="O60164"/>
<dbReference type="BioGRID" id="277184">
    <property type="interactions" value="10"/>
</dbReference>
<dbReference type="FunCoup" id="O60164">
    <property type="interactions" value="903"/>
</dbReference>
<dbReference type="STRING" id="284812.O60164"/>
<dbReference type="iPTMnet" id="O60164"/>
<dbReference type="SwissPalm" id="O60164"/>
<dbReference type="PaxDb" id="4896-SPBC19F5.05c.1"/>
<dbReference type="EnsemblFungi" id="SPBC19F5.05c.1">
    <property type="protein sequence ID" value="SPBC19F5.05c.1:pep"/>
    <property type="gene ID" value="SPBC19F5.05c"/>
</dbReference>
<dbReference type="GeneID" id="2540659"/>
<dbReference type="KEGG" id="spo:2540659"/>
<dbReference type="PomBase" id="SPBC19F5.05c">
    <property type="gene designation" value="ppp1"/>
</dbReference>
<dbReference type="VEuPathDB" id="FungiDB:SPBC19F5.05c"/>
<dbReference type="eggNOG" id="KOG2481">
    <property type="taxonomic scope" value="Eukaryota"/>
</dbReference>
<dbReference type="HOGENOM" id="CLU_019619_0_0_1"/>
<dbReference type="InParanoid" id="O60164"/>
<dbReference type="OMA" id="QKVTWIV"/>
<dbReference type="PhylomeDB" id="O60164"/>
<dbReference type="Reactome" id="R-SPO-6791226">
    <property type="pathway name" value="Major pathway of rRNA processing in the nucleolus and cytosol"/>
</dbReference>
<dbReference type="PRO" id="PR:O60164"/>
<dbReference type="Proteomes" id="UP000002485">
    <property type="component" value="Chromosome II"/>
</dbReference>
<dbReference type="GO" id="GO:0005730">
    <property type="term" value="C:nucleolus"/>
    <property type="evidence" value="ECO:0000314"/>
    <property type="project" value="PomBase"/>
</dbReference>
<dbReference type="GO" id="GO:0005654">
    <property type="term" value="C:nucleoplasm"/>
    <property type="evidence" value="ECO:0007669"/>
    <property type="project" value="UniProtKB-SubCell"/>
</dbReference>
<dbReference type="GO" id="GO:0005634">
    <property type="term" value="C:nucleus"/>
    <property type="evidence" value="ECO:0007005"/>
    <property type="project" value="PomBase"/>
</dbReference>
<dbReference type="GO" id="GO:0070545">
    <property type="term" value="C:PeBoW complex"/>
    <property type="evidence" value="ECO:0000318"/>
    <property type="project" value="GO_Central"/>
</dbReference>
<dbReference type="GO" id="GO:0030684">
    <property type="term" value="C:preribosome"/>
    <property type="evidence" value="ECO:0000314"/>
    <property type="project" value="PomBase"/>
</dbReference>
<dbReference type="GO" id="GO:0030687">
    <property type="term" value="C:preribosome, large subunit precursor"/>
    <property type="evidence" value="ECO:0007669"/>
    <property type="project" value="UniProtKB-UniRule"/>
</dbReference>
<dbReference type="GO" id="GO:0043021">
    <property type="term" value="F:ribonucleoprotein complex binding"/>
    <property type="evidence" value="ECO:0007669"/>
    <property type="project" value="UniProtKB-UniRule"/>
</dbReference>
<dbReference type="GO" id="GO:0003723">
    <property type="term" value="F:RNA binding"/>
    <property type="evidence" value="ECO:0000318"/>
    <property type="project" value="GO_Central"/>
</dbReference>
<dbReference type="GO" id="GO:1902626">
    <property type="term" value="P:assembly of large subunit precursor of preribosome"/>
    <property type="evidence" value="ECO:0000269"/>
    <property type="project" value="PomBase"/>
</dbReference>
<dbReference type="GO" id="GO:0000466">
    <property type="term" value="P:maturation of 5.8S rRNA from tricistronic rRNA transcript (SSU-rRNA, 5.8S rRNA, LSU-rRNA)"/>
    <property type="evidence" value="ECO:0007669"/>
    <property type="project" value="UniProtKB-UniRule"/>
</dbReference>
<dbReference type="GO" id="GO:0000463">
    <property type="term" value="P:maturation of LSU-rRNA from tricistronic rRNA transcript (SSU-rRNA, 5.8S rRNA, LSU-rRNA)"/>
    <property type="evidence" value="ECO:0000318"/>
    <property type="project" value="GO_Central"/>
</dbReference>
<dbReference type="CDD" id="cd17709">
    <property type="entry name" value="BRCT_pescadillo_like"/>
    <property type="match status" value="1"/>
</dbReference>
<dbReference type="FunFam" id="3.40.50.10190:FF:000002">
    <property type="entry name" value="Pescadillo homolog"/>
    <property type="match status" value="1"/>
</dbReference>
<dbReference type="Gene3D" id="3.40.50.10190">
    <property type="entry name" value="BRCT domain"/>
    <property type="match status" value="1"/>
</dbReference>
<dbReference type="HAMAP" id="MF_03028">
    <property type="entry name" value="Pescadillo"/>
    <property type="match status" value="1"/>
</dbReference>
<dbReference type="InterPro" id="IPR001357">
    <property type="entry name" value="BRCT_dom"/>
</dbReference>
<dbReference type="InterPro" id="IPR036420">
    <property type="entry name" value="BRCT_dom_sf"/>
</dbReference>
<dbReference type="InterPro" id="IPR010613">
    <property type="entry name" value="PES"/>
</dbReference>
<dbReference type="PANTHER" id="PTHR12221">
    <property type="entry name" value="PESCADILLO - RELATED"/>
    <property type="match status" value="1"/>
</dbReference>
<dbReference type="PANTHER" id="PTHR12221:SF6">
    <property type="entry name" value="PESCADILLO HOMOLOG"/>
    <property type="match status" value="1"/>
</dbReference>
<dbReference type="Pfam" id="PF06732">
    <property type="entry name" value="Pescadillo_N"/>
    <property type="match status" value="1"/>
</dbReference>
<dbReference type="SMART" id="SM00292">
    <property type="entry name" value="BRCT"/>
    <property type="match status" value="1"/>
</dbReference>
<dbReference type="SUPFAM" id="SSF52113">
    <property type="entry name" value="BRCT domain"/>
    <property type="match status" value="1"/>
</dbReference>
<dbReference type="PROSITE" id="PS50172">
    <property type="entry name" value="BRCT"/>
    <property type="match status" value="1"/>
</dbReference>
<name>PESC_SCHPO</name>
<accession>O60164</accession>
<accession>Q9US84</accession>
<organism>
    <name type="scientific">Schizosaccharomyces pombe (strain 972 / ATCC 24843)</name>
    <name type="common">Fission yeast</name>
    <dbReference type="NCBI Taxonomy" id="284812"/>
    <lineage>
        <taxon>Eukaryota</taxon>
        <taxon>Fungi</taxon>
        <taxon>Dikarya</taxon>
        <taxon>Ascomycota</taxon>
        <taxon>Taphrinomycotina</taxon>
        <taxon>Schizosaccharomycetes</taxon>
        <taxon>Schizosaccharomycetales</taxon>
        <taxon>Schizosaccharomycetaceae</taxon>
        <taxon>Schizosaccharomyces</taxon>
    </lineage>
</organism>
<gene>
    <name type="primary">ppp1</name>
    <name type="synonym">nop7</name>
    <name type="ORF">SPBC19F5.05c</name>
    <name type="ORF">SPBC25D12.01c</name>
</gene>
<sequence length="607" mass="69189">MARVKQKGKAGAARIYITRNQALKKLQLTLADFRRICILKGVYPREPKNKKKANKGSTAPVTFYYTKDIQYLLHEPIVQKFREYKVFARKLSKALGKGELETAKRLEARKPTYSLDHIIKERYPTFHDALKDIDDALSMLFLFSTMPVTDKIGAATVANCERLCAEFQHYVIRSNSLRKAFLSIKGIYYQAEIFGEQITWIVPYKFAQSVPTDVDFRIMHTFLEFYQALMGFVNFKLYNTLGLRYPPKIDVAKSESAAGLAAYELEESSSLPAIVHGNNKNARKNIATLKSKIRDIVNSDANVVEQSEKTTEDADEEPETEENLDEFKPADGADNEDSKSLVSHISSSNTSLFSNFTFFLSREVPRFSLEFVIRAFGGKVGWDPILGSGSPFSESDPVITHHICDRPHISQKYEGRIYIQPQWVYDSINKGILERTDLYACGATLPPHLSPFVKVGENDYDPEAELSAEENDDVSEALDDNISGEAVPISKKNDEPENVEQIDDAEEEDLEHQRELEAEAGGVAYSEYVKQNSKSAKKTKKRQRDTLTAEEKEEKEAKELSKMMMSNKQRKLYSKLKNENSKNENYNNALRNRKRDIEKRKKLKVEN</sequence>